<feature type="chain" id="PRO_0000068684" description="Serine acetyltransferase">
    <location>
        <begin position="1"/>
        <end position="213"/>
    </location>
</feature>
<name>CYSE_STAEQ</name>
<sequence length="213" mass="23679">MLKRMRDDIKMVFEQDPAARSTLEVITTYAGLHAVWSHLIAHKLYKNRRYVAARMISQLSRFFTGIEIHPGAKIGKRLFIDHGMGVVIGETCTIGDNVTIYQGVTLGGTGKEKGKRHPDIGDNVLIAAGSKILGNIKIESNVNIGANSVVLQSVPSYTTVVGIPGHIVKQEGRRIGKTFDHRNLPDPLYEQIKHLERQLEKAKNGEIQDDYII</sequence>
<proteinExistence type="inferred from homology"/>
<gene>
    <name type="primary">cysE</name>
    <name type="ordered locus">SERP0169</name>
</gene>
<protein>
    <recommendedName>
        <fullName>Serine acetyltransferase</fullName>
        <shortName>SAT</shortName>
        <ecNumber>2.3.1.30</ecNumber>
    </recommendedName>
</protein>
<keyword id="KW-0012">Acyltransferase</keyword>
<keyword id="KW-0028">Amino-acid biosynthesis</keyword>
<keyword id="KW-0198">Cysteine biosynthesis</keyword>
<keyword id="KW-0963">Cytoplasm</keyword>
<keyword id="KW-1185">Reference proteome</keyword>
<keyword id="KW-0677">Repeat</keyword>
<keyword id="KW-0808">Transferase</keyword>
<organism>
    <name type="scientific">Staphylococcus epidermidis (strain ATCC 35984 / DSM 28319 / BCRC 17069 / CCUG 31568 / BM 3577 / RP62A)</name>
    <dbReference type="NCBI Taxonomy" id="176279"/>
    <lineage>
        <taxon>Bacteria</taxon>
        <taxon>Bacillati</taxon>
        <taxon>Bacillota</taxon>
        <taxon>Bacilli</taxon>
        <taxon>Bacillales</taxon>
        <taxon>Staphylococcaceae</taxon>
        <taxon>Staphylococcus</taxon>
    </lineage>
</organism>
<evidence type="ECO:0000305" key="1"/>
<reference key="1">
    <citation type="journal article" date="2005" name="J. Bacteriol.">
        <title>Insights on evolution of virulence and resistance from the complete genome analysis of an early methicillin-resistant Staphylococcus aureus strain and a biofilm-producing methicillin-resistant Staphylococcus epidermidis strain.</title>
        <authorList>
            <person name="Gill S.R."/>
            <person name="Fouts D.E."/>
            <person name="Archer G.L."/>
            <person name="Mongodin E.F."/>
            <person name="DeBoy R.T."/>
            <person name="Ravel J."/>
            <person name="Paulsen I.T."/>
            <person name="Kolonay J.F."/>
            <person name="Brinkac L.M."/>
            <person name="Beanan M.J."/>
            <person name="Dodson R.J."/>
            <person name="Daugherty S.C."/>
            <person name="Madupu R."/>
            <person name="Angiuoli S.V."/>
            <person name="Durkin A.S."/>
            <person name="Haft D.H."/>
            <person name="Vamathevan J.J."/>
            <person name="Khouri H."/>
            <person name="Utterback T.R."/>
            <person name="Lee C."/>
            <person name="Dimitrov G."/>
            <person name="Jiang L."/>
            <person name="Qin H."/>
            <person name="Weidman J."/>
            <person name="Tran K."/>
            <person name="Kang K.H."/>
            <person name="Hance I.R."/>
            <person name="Nelson K.E."/>
            <person name="Fraser C.M."/>
        </authorList>
    </citation>
    <scope>NUCLEOTIDE SEQUENCE [LARGE SCALE GENOMIC DNA]</scope>
    <source>
        <strain>ATCC 35984 / DSM 28319 / BCRC 17069 / CCUG 31568 / BM 3577 / RP62A</strain>
    </source>
</reference>
<comment type="catalytic activity">
    <reaction>
        <text>L-serine + acetyl-CoA = O-acetyl-L-serine + CoA</text>
        <dbReference type="Rhea" id="RHEA:24560"/>
        <dbReference type="ChEBI" id="CHEBI:33384"/>
        <dbReference type="ChEBI" id="CHEBI:57287"/>
        <dbReference type="ChEBI" id="CHEBI:57288"/>
        <dbReference type="ChEBI" id="CHEBI:58340"/>
        <dbReference type="EC" id="2.3.1.30"/>
    </reaction>
</comment>
<comment type="pathway">
    <text>Amino-acid biosynthesis; L-cysteine biosynthesis; L-cysteine from L-serine: step 1/2.</text>
</comment>
<comment type="subcellular location">
    <subcellularLocation>
        <location>Cytoplasm</location>
    </subcellularLocation>
</comment>
<comment type="similarity">
    <text evidence="1">Belongs to the transferase hexapeptide repeat family.</text>
</comment>
<accession>Q5HRM4</accession>
<dbReference type="EC" id="2.3.1.30"/>
<dbReference type="EMBL" id="CP000029">
    <property type="protein sequence ID" value="AAW53552.1"/>
    <property type="molecule type" value="Genomic_DNA"/>
</dbReference>
<dbReference type="SMR" id="Q5HRM4"/>
<dbReference type="STRING" id="176279.SERP0169"/>
<dbReference type="KEGG" id="ser:SERP0169"/>
<dbReference type="eggNOG" id="COG1045">
    <property type="taxonomic scope" value="Bacteria"/>
</dbReference>
<dbReference type="HOGENOM" id="CLU_051638_10_0_9"/>
<dbReference type="UniPathway" id="UPA00136">
    <property type="reaction ID" value="UER00199"/>
</dbReference>
<dbReference type="Proteomes" id="UP000000531">
    <property type="component" value="Chromosome"/>
</dbReference>
<dbReference type="GO" id="GO:0005737">
    <property type="term" value="C:cytoplasm"/>
    <property type="evidence" value="ECO:0007669"/>
    <property type="project" value="UniProtKB-SubCell"/>
</dbReference>
<dbReference type="GO" id="GO:0009001">
    <property type="term" value="F:serine O-acetyltransferase activity"/>
    <property type="evidence" value="ECO:0007669"/>
    <property type="project" value="UniProtKB-EC"/>
</dbReference>
<dbReference type="GO" id="GO:0006535">
    <property type="term" value="P:cysteine biosynthetic process from serine"/>
    <property type="evidence" value="ECO:0007669"/>
    <property type="project" value="InterPro"/>
</dbReference>
<dbReference type="CDD" id="cd03354">
    <property type="entry name" value="LbH_SAT"/>
    <property type="match status" value="1"/>
</dbReference>
<dbReference type="FunFam" id="1.10.3130.10:FF:000002">
    <property type="entry name" value="Serine acetyltransferase"/>
    <property type="match status" value="1"/>
</dbReference>
<dbReference type="FunFam" id="2.160.10.10:FF:000007">
    <property type="entry name" value="Serine acetyltransferase"/>
    <property type="match status" value="1"/>
</dbReference>
<dbReference type="Gene3D" id="2.160.10.10">
    <property type="entry name" value="Hexapeptide repeat proteins"/>
    <property type="match status" value="1"/>
</dbReference>
<dbReference type="Gene3D" id="1.10.3130.10">
    <property type="entry name" value="serine acetyltransferase, domain 1"/>
    <property type="match status" value="1"/>
</dbReference>
<dbReference type="InterPro" id="IPR001451">
    <property type="entry name" value="Hexapep"/>
</dbReference>
<dbReference type="InterPro" id="IPR018357">
    <property type="entry name" value="Hexapep_transf_CS"/>
</dbReference>
<dbReference type="InterPro" id="IPR045304">
    <property type="entry name" value="LbH_SAT"/>
</dbReference>
<dbReference type="InterPro" id="IPR042122">
    <property type="entry name" value="Ser_AcTrfase_N_sf"/>
</dbReference>
<dbReference type="InterPro" id="IPR005881">
    <property type="entry name" value="Ser_O-AcTrfase"/>
</dbReference>
<dbReference type="InterPro" id="IPR053376">
    <property type="entry name" value="Serine_acetyltransferase"/>
</dbReference>
<dbReference type="InterPro" id="IPR011004">
    <property type="entry name" value="Trimer_LpxA-like_sf"/>
</dbReference>
<dbReference type="NCBIfam" id="TIGR01172">
    <property type="entry name" value="cysE"/>
    <property type="match status" value="1"/>
</dbReference>
<dbReference type="NCBIfam" id="NF041874">
    <property type="entry name" value="EPS_EpsC"/>
    <property type="match status" value="1"/>
</dbReference>
<dbReference type="PANTHER" id="PTHR42811">
    <property type="entry name" value="SERINE ACETYLTRANSFERASE"/>
    <property type="match status" value="1"/>
</dbReference>
<dbReference type="Pfam" id="PF00132">
    <property type="entry name" value="Hexapep"/>
    <property type="match status" value="1"/>
</dbReference>
<dbReference type="Pfam" id="PF14602">
    <property type="entry name" value="Hexapep_2"/>
    <property type="match status" value="1"/>
</dbReference>
<dbReference type="PIRSF" id="PIRSF000441">
    <property type="entry name" value="CysE"/>
    <property type="match status" value="1"/>
</dbReference>
<dbReference type="SUPFAM" id="SSF51161">
    <property type="entry name" value="Trimeric LpxA-like enzymes"/>
    <property type="match status" value="1"/>
</dbReference>
<dbReference type="PROSITE" id="PS00101">
    <property type="entry name" value="HEXAPEP_TRANSFERASES"/>
    <property type="match status" value="1"/>
</dbReference>